<keyword id="KW-1185">Reference proteome</keyword>
<keyword id="KW-0687">Ribonucleoprotein</keyword>
<keyword id="KW-0689">Ribosomal protein</keyword>
<keyword id="KW-0694">RNA-binding</keyword>
<keyword id="KW-0699">rRNA-binding</keyword>
<keyword id="KW-0820">tRNA-binding</keyword>
<sequence length="156" mass="17132">MPRKGPAPKRPLVVDPVYGSPLVTQLINKVLVDGKKSTAERIVYGALEGARAKNGADPVATLKKAMDNIKPALEVRSRRVGGATYQVPVEVKPGRSTALALRWLVGFSKARREKTMTERLMNEILDASNGLGGAVKRREDTHKMAEANKAFAHYRW</sequence>
<gene>
    <name evidence="1" type="primary">rpsG</name>
    <name type="ordered locus">Mlut_17220</name>
</gene>
<accession>C5CC68</accession>
<reference key="1">
    <citation type="journal article" date="2010" name="J. Bacteriol.">
        <title>Genome sequence of the Fleming strain of Micrococcus luteus, a simple free-living actinobacterium.</title>
        <authorList>
            <person name="Young M."/>
            <person name="Artsatbanov V."/>
            <person name="Beller H.R."/>
            <person name="Chandra G."/>
            <person name="Chater K.F."/>
            <person name="Dover L.G."/>
            <person name="Goh E.B."/>
            <person name="Kahan T."/>
            <person name="Kaprelyants A.S."/>
            <person name="Kyrpides N."/>
            <person name="Lapidus A."/>
            <person name="Lowry S.R."/>
            <person name="Lykidis A."/>
            <person name="Mahillon J."/>
            <person name="Markowitz V."/>
            <person name="Mavromatis K."/>
            <person name="Mukamolova G.V."/>
            <person name="Oren A."/>
            <person name="Rokem J.S."/>
            <person name="Smith M.C."/>
            <person name="Young D.I."/>
            <person name="Greenblatt C.L."/>
        </authorList>
    </citation>
    <scope>NUCLEOTIDE SEQUENCE [LARGE SCALE GENOMIC DNA]</scope>
    <source>
        <strain>ATCC 4698 / DSM 20030 / JCM 1464 / CCM 169 / CCUG 5858 / IAM 1056 / NBRC 3333 / NCIMB 9278 / NCTC 2665 / VKM Ac-2230</strain>
    </source>
</reference>
<dbReference type="EMBL" id="CP001628">
    <property type="protein sequence ID" value="ACS31209.1"/>
    <property type="molecule type" value="Genomic_DNA"/>
</dbReference>
<dbReference type="RefSeq" id="WP_010080379.1">
    <property type="nucleotide sequence ID" value="NZ_WBMF01000001.1"/>
</dbReference>
<dbReference type="SMR" id="C5CC68"/>
<dbReference type="STRING" id="465515.Mlut_17220"/>
<dbReference type="EnsemblBacteria" id="ACS31209">
    <property type="protein sequence ID" value="ACS31209"/>
    <property type="gene ID" value="Mlut_17220"/>
</dbReference>
<dbReference type="GeneID" id="93364264"/>
<dbReference type="KEGG" id="mlu:Mlut_17220"/>
<dbReference type="eggNOG" id="COG0049">
    <property type="taxonomic scope" value="Bacteria"/>
</dbReference>
<dbReference type="HOGENOM" id="CLU_072226_1_1_11"/>
<dbReference type="Proteomes" id="UP000000738">
    <property type="component" value="Chromosome"/>
</dbReference>
<dbReference type="GO" id="GO:0015935">
    <property type="term" value="C:small ribosomal subunit"/>
    <property type="evidence" value="ECO:0007669"/>
    <property type="project" value="InterPro"/>
</dbReference>
<dbReference type="GO" id="GO:0019843">
    <property type="term" value="F:rRNA binding"/>
    <property type="evidence" value="ECO:0007669"/>
    <property type="project" value="UniProtKB-UniRule"/>
</dbReference>
<dbReference type="GO" id="GO:0003735">
    <property type="term" value="F:structural constituent of ribosome"/>
    <property type="evidence" value="ECO:0007669"/>
    <property type="project" value="InterPro"/>
</dbReference>
<dbReference type="GO" id="GO:0000049">
    <property type="term" value="F:tRNA binding"/>
    <property type="evidence" value="ECO:0007669"/>
    <property type="project" value="UniProtKB-UniRule"/>
</dbReference>
<dbReference type="GO" id="GO:0006412">
    <property type="term" value="P:translation"/>
    <property type="evidence" value="ECO:0007669"/>
    <property type="project" value="UniProtKB-UniRule"/>
</dbReference>
<dbReference type="CDD" id="cd14869">
    <property type="entry name" value="uS7_Bacteria"/>
    <property type="match status" value="1"/>
</dbReference>
<dbReference type="FunFam" id="1.10.455.10:FF:000001">
    <property type="entry name" value="30S ribosomal protein S7"/>
    <property type="match status" value="1"/>
</dbReference>
<dbReference type="Gene3D" id="1.10.455.10">
    <property type="entry name" value="Ribosomal protein S7 domain"/>
    <property type="match status" value="1"/>
</dbReference>
<dbReference type="HAMAP" id="MF_00480_B">
    <property type="entry name" value="Ribosomal_uS7_B"/>
    <property type="match status" value="1"/>
</dbReference>
<dbReference type="InterPro" id="IPR000235">
    <property type="entry name" value="Ribosomal_uS7"/>
</dbReference>
<dbReference type="InterPro" id="IPR005717">
    <property type="entry name" value="Ribosomal_uS7_bac/org-type"/>
</dbReference>
<dbReference type="InterPro" id="IPR020606">
    <property type="entry name" value="Ribosomal_uS7_CS"/>
</dbReference>
<dbReference type="InterPro" id="IPR023798">
    <property type="entry name" value="Ribosomal_uS7_dom"/>
</dbReference>
<dbReference type="InterPro" id="IPR036823">
    <property type="entry name" value="Ribosomal_uS7_dom_sf"/>
</dbReference>
<dbReference type="NCBIfam" id="TIGR01029">
    <property type="entry name" value="rpsG_bact"/>
    <property type="match status" value="1"/>
</dbReference>
<dbReference type="PANTHER" id="PTHR11205">
    <property type="entry name" value="RIBOSOMAL PROTEIN S7"/>
    <property type="match status" value="1"/>
</dbReference>
<dbReference type="Pfam" id="PF00177">
    <property type="entry name" value="Ribosomal_S7"/>
    <property type="match status" value="1"/>
</dbReference>
<dbReference type="PIRSF" id="PIRSF002122">
    <property type="entry name" value="RPS7p_RPS7a_RPS5e_RPS7o"/>
    <property type="match status" value="1"/>
</dbReference>
<dbReference type="SUPFAM" id="SSF47973">
    <property type="entry name" value="Ribosomal protein S7"/>
    <property type="match status" value="1"/>
</dbReference>
<dbReference type="PROSITE" id="PS00052">
    <property type="entry name" value="RIBOSOMAL_S7"/>
    <property type="match status" value="1"/>
</dbReference>
<name>RS7_MICLC</name>
<protein>
    <recommendedName>
        <fullName evidence="1">Small ribosomal subunit protein uS7</fullName>
    </recommendedName>
    <alternativeName>
        <fullName evidence="2">30S ribosomal protein S7</fullName>
    </alternativeName>
</protein>
<evidence type="ECO:0000255" key="1">
    <source>
        <dbReference type="HAMAP-Rule" id="MF_00480"/>
    </source>
</evidence>
<evidence type="ECO:0000305" key="2"/>
<comment type="function">
    <text evidence="1">One of the primary rRNA binding proteins, it binds directly to 16S rRNA where it nucleates assembly of the head domain of the 30S subunit. Is located at the subunit interface close to the decoding center, probably blocks exit of the E-site tRNA.</text>
</comment>
<comment type="subunit">
    <text evidence="1">Part of the 30S ribosomal subunit. Contacts proteins S9 and S11.</text>
</comment>
<comment type="similarity">
    <text evidence="1">Belongs to the universal ribosomal protein uS7 family.</text>
</comment>
<feature type="chain" id="PRO_1000206410" description="Small ribosomal subunit protein uS7">
    <location>
        <begin position="1"/>
        <end position="156"/>
    </location>
</feature>
<organism>
    <name type="scientific">Micrococcus luteus (strain ATCC 4698 / DSM 20030 / JCM 1464 / CCM 169 / CCUG 5858 / IAM 1056 / NBRC 3333 / NCIMB 9278 / NCTC 2665 / VKM Ac-2230)</name>
    <name type="common">Micrococcus lysodeikticus</name>
    <dbReference type="NCBI Taxonomy" id="465515"/>
    <lineage>
        <taxon>Bacteria</taxon>
        <taxon>Bacillati</taxon>
        <taxon>Actinomycetota</taxon>
        <taxon>Actinomycetes</taxon>
        <taxon>Micrococcales</taxon>
        <taxon>Micrococcaceae</taxon>
        <taxon>Micrococcus</taxon>
    </lineage>
</organism>
<proteinExistence type="inferred from homology"/>